<organism>
    <name type="scientific">Pan troglodytes</name>
    <name type="common">Chimpanzee</name>
    <dbReference type="NCBI Taxonomy" id="9598"/>
    <lineage>
        <taxon>Eukaryota</taxon>
        <taxon>Metazoa</taxon>
        <taxon>Chordata</taxon>
        <taxon>Craniata</taxon>
        <taxon>Vertebrata</taxon>
        <taxon>Euteleostomi</taxon>
        <taxon>Mammalia</taxon>
        <taxon>Eutheria</taxon>
        <taxon>Euarchontoglires</taxon>
        <taxon>Primates</taxon>
        <taxon>Haplorrhini</taxon>
        <taxon>Catarrhini</taxon>
        <taxon>Hominidae</taxon>
        <taxon>Pan</taxon>
    </lineage>
</organism>
<protein>
    <recommendedName>
        <fullName>Uncharacterized protein C21orf119 homolog</fullName>
    </recommendedName>
</protein>
<sequence>MGRGDTPRHPPSPAAGFGVHRGALLIPVALRVLWAGRTPRPFTPGLADPRRLGPRRVQAAQ</sequence>
<dbReference type="EMBL" id="AL954207">
    <property type="protein sequence ID" value="CAH18581.1"/>
    <property type="molecule type" value="Genomic_DNA"/>
</dbReference>
<dbReference type="EMBL" id="AL954209">
    <property type="protein sequence ID" value="CAH18585.1"/>
    <property type="molecule type" value="Genomic_DNA"/>
</dbReference>
<dbReference type="PaxDb" id="9598-ENSPTRP00000023844"/>
<dbReference type="eggNOG" id="ENOG502TEVR">
    <property type="taxonomic scope" value="Eukaryota"/>
</dbReference>
<dbReference type="HOGENOM" id="CLU_2921935_0_0_1"/>
<dbReference type="InParanoid" id="Q68US6"/>
<dbReference type="Proteomes" id="UP000002277">
    <property type="component" value="Unplaced"/>
</dbReference>
<dbReference type="Proteomes" id="UP000243858">
    <property type="component" value="Chromosome 22"/>
</dbReference>
<keyword id="KW-1185">Reference proteome</keyword>
<reference key="1">
    <citation type="journal article" date="2004" name="Nature">
        <title>DNA sequence and comparative analysis of chimpanzee chromosome 22.</title>
        <authorList>
            <person name="Watanabe H."/>
            <person name="Fujiyama A."/>
            <person name="Hattori M."/>
            <person name="Taylor T.D."/>
            <person name="Toyoda A."/>
            <person name="Kuroki Y."/>
            <person name="Noguchi H."/>
            <person name="BenKahla A."/>
            <person name="Lehrach H."/>
            <person name="Sudbrak R."/>
            <person name="Kube M."/>
            <person name="Taenzer S."/>
            <person name="Galgoczy P."/>
            <person name="Platzer M."/>
            <person name="Scharfe M."/>
            <person name="Nordsiek G."/>
            <person name="Bloecker H."/>
            <person name="Hellmann I."/>
            <person name="Khaitovich P."/>
            <person name="Paeaebo S."/>
            <person name="Reinhardt R."/>
            <person name="Zheng H.-J."/>
            <person name="Zhang X.-L."/>
            <person name="Zhu G.-F."/>
            <person name="Wang B.-F."/>
            <person name="Fu G."/>
            <person name="Ren S.-X."/>
            <person name="Zhao G.-P."/>
            <person name="Chen Z."/>
            <person name="Lee Y.-S."/>
            <person name="Cheong J.-E."/>
            <person name="Choi S.-H."/>
            <person name="Wu K.-M."/>
            <person name="Liu T.-T."/>
            <person name="Hsiao K.-J."/>
            <person name="Tsai S.-F."/>
            <person name="Kim C.-G."/>
            <person name="Oota S."/>
            <person name="Kitano T."/>
            <person name="Kohara Y."/>
            <person name="Saitou N."/>
            <person name="Park H.-S."/>
            <person name="Wang S.-Y."/>
            <person name="Yaspo M.-L."/>
            <person name="Sakaki Y."/>
        </authorList>
    </citation>
    <scope>NUCLEOTIDE SEQUENCE [LARGE SCALE GENOMIC DNA]</scope>
</reference>
<accession>Q68US6</accession>
<proteinExistence type="predicted"/>
<feature type="chain" id="PRO_0000079550" description="Uncharacterized protein C21orf119 homolog">
    <location>
        <begin position="1"/>
        <end position="61"/>
    </location>
</feature>
<feature type="region of interest" description="Disordered" evidence="1">
    <location>
        <begin position="39"/>
        <end position="61"/>
    </location>
</feature>
<evidence type="ECO:0000256" key="1">
    <source>
        <dbReference type="SAM" id="MobiDB-lite"/>
    </source>
</evidence>
<name>CU119_PANTR</name>